<protein>
    <recommendedName>
        <fullName evidence="1">Acetylglutamate kinase</fullName>
        <ecNumber evidence="1">2.7.2.8</ecNumber>
    </recommendedName>
    <alternativeName>
        <fullName evidence="1">N-acetyl-L-glutamate 5-phosphotransferase</fullName>
    </alternativeName>
    <alternativeName>
        <fullName evidence="1">NAG kinase</fullName>
        <shortName evidence="1">NAGK</shortName>
    </alternativeName>
</protein>
<evidence type="ECO:0000255" key="1">
    <source>
        <dbReference type="HAMAP-Rule" id="MF_00082"/>
    </source>
</evidence>
<comment type="function">
    <text evidence="1">Catalyzes the ATP-dependent phosphorylation of N-acetyl-L-glutamate.</text>
</comment>
<comment type="catalytic activity">
    <reaction evidence="1">
        <text>N-acetyl-L-glutamate + ATP = N-acetyl-L-glutamyl 5-phosphate + ADP</text>
        <dbReference type="Rhea" id="RHEA:14629"/>
        <dbReference type="ChEBI" id="CHEBI:30616"/>
        <dbReference type="ChEBI" id="CHEBI:44337"/>
        <dbReference type="ChEBI" id="CHEBI:57936"/>
        <dbReference type="ChEBI" id="CHEBI:456216"/>
        <dbReference type="EC" id="2.7.2.8"/>
    </reaction>
</comment>
<comment type="pathway">
    <text evidence="1">Amino-acid biosynthesis; L-arginine biosynthesis; N(2)-acetyl-L-ornithine from L-glutamate: step 2/4.</text>
</comment>
<comment type="subcellular location">
    <subcellularLocation>
        <location evidence="1">Cytoplasm</location>
    </subcellularLocation>
</comment>
<comment type="similarity">
    <text evidence="1">Belongs to the acetylglutamate kinase family. ArgB subfamily.</text>
</comment>
<name>ARGB_BACC2</name>
<reference key="1">
    <citation type="submission" date="2008-10" db="EMBL/GenBank/DDBJ databases">
        <title>Genome sequence of Bacillus cereus G9842.</title>
        <authorList>
            <person name="Dodson R.J."/>
            <person name="Durkin A.S."/>
            <person name="Rosovitz M.J."/>
            <person name="Rasko D.A."/>
            <person name="Hoffmaster A."/>
            <person name="Ravel J."/>
            <person name="Sutton G."/>
        </authorList>
    </citation>
    <scope>NUCLEOTIDE SEQUENCE [LARGE SCALE GENOMIC DNA]</scope>
    <source>
        <strain>G9842</strain>
    </source>
</reference>
<gene>
    <name evidence="1" type="primary">argB</name>
    <name type="ordered locus">BCG9842_B0996</name>
</gene>
<organism>
    <name type="scientific">Bacillus cereus (strain G9842)</name>
    <dbReference type="NCBI Taxonomy" id="405531"/>
    <lineage>
        <taxon>Bacteria</taxon>
        <taxon>Bacillati</taxon>
        <taxon>Bacillota</taxon>
        <taxon>Bacilli</taxon>
        <taxon>Bacillales</taxon>
        <taxon>Bacillaceae</taxon>
        <taxon>Bacillus</taxon>
        <taxon>Bacillus cereus group</taxon>
    </lineage>
</organism>
<feature type="chain" id="PRO_1000117117" description="Acetylglutamate kinase">
    <location>
        <begin position="1"/>
        <end position="255"/>
    </location>
</feature>
<feature type="binding site" evidence="1">
    <location>
        <begin position="40"/>
        <end position="41"/>
    </location>
    <ligand>
        <name>substrate</name>
    </ligand>
</feature>
<feature type="binding site" evidence="1">
    <location>
        <position position="62"/>
    </location>
    <ligand>
        <name>substrate</name>
    </ligand>
</feature>
<feature type="binding site" evidence="1">
    <location>
        <position position="153"/>
    </location>
    <ligand>
        <name>substrate</name>
    </ligand>
</feature>
<feature type="site" description="Transition state stabilizer" evidence="1">
    <location>
        <position position="8"/>
    </location>
</feature>
<feature type="site" description="Transition state stabilizer" evidence="1">
    <location>
        <position position="212"/>
    </location>
</feature>
<keyword id="KW-0028">Amino-acid biosynthesis</keyword>
<keyword id="KW-0055">Arginine biosynthesis</keyword>
<keyword id="KW-0067">ATP-binding</keyword>
<keyword id="KW-0963">Cytoplasm</keyword>
<keyword id="KW-0418">Kinase</keyword>
<keyword id="KW-0547">Nucleotide-binding</keyword>
<keyword id="KW-0808">Transferase</keyword>
<dbReference type="EC" id="2.7.2.8" evidence="1"/>
<dbReference type="EMBL" id="CP001186">
    <property type="protein sequence ID" value="ACK94780.1"/>
    <property type="molecule type" value="Genomic_DNA"/>
</dbReference>
<dbReference type="RefSeq" id="WP_001286790.1">
    <property type="nucleotide sequence ID" value="NC_011772.1"/>
</dbReference>
<dbReference type="SMR" id="B7IWP4"/>
<dbReference type="KEGG" id="bcg:BCG9842_B0996"/>
<dbReference type="HOGENOM" id="CLU_053680_1_0_9"/>
<dbReference type="UniPathway" id="UPA00068">
    <property type="reaction ID" value="UER00107"/>
</dbReference>
<dbReference type="Proteomes" id="UP000006744">
    <property type="component" value="Chromosome"/>
</dbReference>
<dbReference type="GO" id="GO:0005737">
    <property type="term" value="C:cytoplasm"/>
    <property type="evidence" value="ECO:0007669"/>
    <property type="project" value="UniProtKB-SubCell"/>
</dbReference>
<dbReference type="GO" id="GO:0003991">
    <property type="term" value="F:acetylglutamate kinase activity"/>
    <property type="evidence" value="ECO:0007669"/>
    <property type="project" value="UniProtKB-UniRule"/>
</dbReference>
<dbReference type="GO" id="GO:0005524">
    <property type="term" value="F:ATP binding"/>
    <property type="evidence" value="ECO:0007669"/>
    <property type="project" value="UniProtKB-UniRule"/>
</dbReference>
<dbReference type="GO" id="GO:0042450">
    <property type="term" value="P:arginine biosynthetic process via ornithine"/>
    <property type="evidence" value="ECO:0007669"/>
    <property type="project" value="UniProtKB-UniRule"/>
</dbReference>
<dbReference type="GO" id="GO:0006526">
    <property type="term" value="P:L-arginine biosynthetic process"/>
    <property type="evidence" value="ECO:0007669"/>
    <property type="project" value="UniProtKB-UniPathway"/>
</dbReference>
<dbReference type="CDD" id="cd04238">
    <property type="entry name" value="AAK_NAGK-like"/>
    <property type="match status" value="1"/>
</dbReference>
<dbReference type="FunFam" id="3.40.1160.10:FF:000034">
    <property type="entry name" value="Acetylglutamate kinase"/>
    <property type="match status" value="1"/>
</dbReference>
<dbReference type="Gene3D" id="3.40.1160.10">
    <property type="entry name" value="Acetylglutamate kinase-like"/>
    <property type="match status" value="1"/>
</dbReference>
<dbReference type="HAMAP" id="MF_00082">
    <property type="entry name" value="ArgB"/>
    <property type="match status" value="1"/>
</dbReference>
<dbReference type="InterPro" id="IPR036393">
    <property type="entry name" value="AceGlu_kinase-like_sf"/>
</dbReference>
<dbReference type="InterPro" id="IPR004662">
    <property type="entry name" value="AcgluKinase_fam"/>
</dbReference>
<dbReference type="InterPro" id="IPR037528">
    <property type="entry name" value="ArgB"/>
</dbReference>
<dbReference type="InterPro" id="IPR001048">
    <property type="entry name" value="Asp/Glu/Uridylate_kinase"/>
</dbReference>
<dbReference type="NCBIfam" id="TIGR00761">
    <property type="entry name" value="argB"/>
    <property type="match status" value="1"/>
</dbReference>
<dbReference type="PANTHER" id="PTHR23342">
    <property type="entry name" value="N-ACETYLGLUTAMATE SYNTHASE"/>
    <property type="match status" value="1"/>
</dbReference>
<dbReference type="PANTHER" id="PTHR23342:SF0">
    <property type="entry name" value="N-ACETYLGLUTAMATE SYNTHASE, MITOCHONDRIAL"/>
    <property type="match status" value="1"/>
</dbReference>
<dbReference type="Pfam" id="PF00696">
    <property type="entry name" value="AA_kinase"/>
    <property type="match status" value="1"/>
</dbReference>
<dbReference type="PIRSF" id="PIRSF000728">
    <property type="entry name" value="NAGK"/>
    <property type="match status" value="1"/>
</dbReference>
<dbReference type="PRINTS" id="PR01469">
    <property type="entry name" value="CARBMTKINASE"/>
</dbReference>
<dbReference type="SUPFAM" id="SSF53633">
    <property type="entry name" value="Carbamate kinase-like"/>
    <property type="match status" value="1"/>
</dbReference>
<proteinExistence type="inferred from homology"/>
<sequence>MSDYIVVKCGGSMLNQLNAVFFDCIKKLQQKYKVVIIHGGGPEIDAKLKDCNINVEKRDGLRVTPKEVMDVVQMVLCGSTNKKLVMNLQKHNLLAVGCSGCDGNLLQVQPVSEEIGYVGEVSYVETALLKGLINMGYIPVIAPIGVNGNEIYNINADNAAAGIAAALGAKELIFITDVDGILHEGNLVKETDESEIATFIETGVITGGMIPKVQAALASLKMGVQKISIVNGTKDFTEVTGECIGTTVTKGVSIA</sequence>
<accession>B7IWP4</accession>